<reference key="1">
    <citation type="submission" date="2004-06" db="EMBL/GenBank/DDBJ databases">
        <authorList>
            <consortium name="NIH - Xenopus Gene Collection (XGC) project"/>
        </authorList>
    </citation>
    <scope>NUCLEOTIDE SEQUENCE [LARGE SCALE MRNA]</scope>
    <source>
        <tissue>Kidney</tissue>
    </source>
</reference>
<evidence type="ECO:0000250" key="1"/>
<evidence type="ECO:0000256" key="2">
    <source>
        <dbReference type="SAM" id="MobiDB-lite"/>
    </source>
</evidence>
<evidence type="ECO:0000305" key="3"/>
<accession>Q6DJL7</accession>
<comment type="function">
    <text evidence="1">Required for the activation of aurka at the onset of mitosis.</text>
</comment>
<comment type="similarity">
    <text evidence="3">Belongs to the BORA family.</text>
</comment>
<proteinExistence type="evidence at transcript level"/>
<protein>
    <recommendedName>
        <fullName>Protein aurora borealis</fullName>
    </recommendedName>
</protein>
<sequence length="607" mass="66621">MGDVRTQLTPETPGRAAILNPFESPSDYCSLHEPFVSSPSVFKPSKSAATPQQFRWSIDQLAAINPIEIDAEDIHRQALYLSRAKTDKETEERRQKAIEEFFTKRTIVPSPWTQHEGKPAAPFHSTKCADLIHESPVGRVQAVQSGKSTVGCQTHLSLPVDFNLEKVLGEYFRAEETADQSQDNLSSSSLRRKLFLDGHASGSECSSPSSPPQEGPYYDPPAALGVLCSIDLSPVRCRSPTQTPSSGQFSSSPIQGGRRAFSLGSITSPTFLEKSPASVTSPSFSPIAINLGKTPDAEQKRLIFPSPETLSASTSMVNAFTRNPYIEGCSPIKSIFQIKSRSCRGNAPHRTSLFQIPFALEPHSDDKENSPPSSIKSPEGDLSSLFHQLENIVPDGHVMMGGEPIVSPTVYMQQEYLQSEELKENDTVEMVEPVEIEEEHSWPKETVATDNIPMASFMTGITFSGESSHMCMSPLAESSVIPCENSSIQVDSGYNTQTYGSCIMDGIGAETTYKENDTHISDIQNKCQHFKVKDISSVDCKNQLLEPESPEFQHSTQKSQNKLARYSLNSGMWKLTGDGAINRLNKNGGVQSPPRTLNPKSLSHFLQ</sequence>
<keyword id="KW-0131">Cell cycle</keyword>
<keyword id="KW-0132">Cell division</keyword>
<keyword id="KW-0498">Mitosis</keyword>
<keyword id="KW-1185">Reference proteome</keyword>
<name>BORA_XENLA</name>
<feature type="chain" id="PRO_0000273209" description="Protein aurora borealis">
    <location>
        <begin position="1"/>
        <end position="607"/>
    </location>
</feature>
<feature type="region of interest" description="Disordered" evidence="2">
    <location>
        <begin position="362"/>
        <end position="381"/>
    </location>
</feature>
<feature type="region of interest" description="Disordered" evidence="2">
    <location>
        <begin position="584"/>
        <end position="607"/>
    </location>
</feature>
<organism>
    <name type="scientific">Xenopus laevis</name>
    <name type="common">African clawed frog</name>
    <dbReference type="NCBI Taxonomy" id="8355"/>
    <lineage>
        <taxon>Eukaryota</taxon>
        <taxon>Metazoa</taxon>
        <taxon>Chordata</taxon>
        <taxon>Craniata</taxon>
        <taxon>Vertebrata</taxon>
        <taxon>Euteleostomi</taxon>
        <taxon>Amphibia</taxon>
        <taxon>Batrachia</taxon>
        <taxon>Anura</taxon>
        <taxon>Pipoidea</taxon>
        <taxon>Pipidae</taxon>
        <taxon>Xenopodinae</taxon>
        <taxon>Xenopus</taxon>
        <taxon>Xenopus</taxon>
    </lineage>
</organism>
<dbReference type="EMBL" id="BC075159">
    <property type="protein sequence ID" value="AAH75159.1"/>
    <property type="molecule type" value="mRNA"/>
</dbReference>
<dbReference type="RefSeq" id="NP_001086360.1">
    <property type="nucleotide sequence ID" value="NM_001092891.1"/>
</dbReference>
<dbReference type="RefSeq" id="XP_018103782.1">
    <property type="nucleotide sequence ID" value="XM_018248293.1"/>
</dbReference>
<dbReference type="GeneID" id="444789"/>
<dbReference type="KEGG" id="xla:444789"/>
<dbReference type="AGR" id="Xenbase:XB-GENE-5865605"/>
<dbReference type="CTD" id="444789"/>
<dbReference type="Xenbase" id="XB-GENE-5865605">
    <property type="gene designation" value="bora.S"/>
</dbReference>
<dbReference type="OMA" id="STWIKEP"/>
<dbReference type="OrthoDB" id="10020858at2759"/>
<dbReference type="Proteomes" id="UP000186698">
    <property type="component" value="Chromosome 2S"/>
</dbReference>
<dbReference type="Bgee" id="444789">
    <property type="expression patterns" value="Expressed in egg cell and 18 other cell types or tissues"/>
</dbReference>
<dbReference type="GO" id="GO:0005737">
    <property type="term" value="C:cytoplasm"/>
    <property type="evidence" value="ECO:0000318"/>
    <property type="project" value="GO_Central"/>
</dbReference>
<dbReference type="GO" id="GO:0005634">
    <property type="term" value="C:nucleus"/>
    <property type="evidence" value="ECO:0000318"/>
    <property type="project" value="GO_Central"/>
</dbReference>
<dbReference type="GO" id="GO:0019901">
    <property type="term" value="F:protein kinase binding"/>
    <property type="evidence" value="ECO:0000318"/>
    <property type="project" value="GO_Central"/>
</dbReference>
<dbReference type="GO" id="GO:0051301">
    <property type="term" value="P:cell division"/>
    <property type="evidence" value="ECO:0007669"/>
    <property type="project" value="UniProtKB-KW"/>
</dbReference>
<dbReference type="GO" id="GO:0007088">
    <property type="term" value="P:regulation of mitotic nuclear division"/>
    <property type="evidence" value="ECO:0000250"/>
    <property type="project" value="UniProtKB"/>
</dbReference>
<dbReference type="GO" id="GO:0060236">
    <property type="term" value="P:regulation of mitotic spindle organization"/>
    <property type="evidence" value="ECO:0000250"/>
    <property type="project" value="UniProtKB"/>
</dbReference>
<dbReference type="GO" id="GO:0032880">
    <property type="term" value="P:regulation of protein localization"/>
    <property type="evidence" value="ECO:0000250"/>
    <property type="project" value="UniProtKB"/>
</dbReference>
<dbReference type="InterPro" id="IPR023252">
    <property type="entry name" value="Aurora_borealis_protein"/>
</dbReference>
<dbReference type="PANTHER" id="PTHR14728">
    <property type="entry name" value="PROTEIN AURORA BOREALIS"/>
    <property type="match status" value="1"/>
</dbReference>
<dbReference type="PANTHER" id="PTHR14728:SF2">
    <property type="entry name" value="PROTEIN AURORA BOREALIS"/>
    <property type="match status" value="1"/>
</dbReference>
<dbReference type="Pfam" id="PF15280">
    <property type="entry name" value="BORA_N"/>
    <property type="match status" value="1"/>
</dbReference>
<dbReference type="PRINTS" id="PR02038">
    <property type="entry name" value="AURORABORA"/>
</dbReference>
<gene>
    <name type="primary">bora</name>
</gene>